<keyword id="KW-0963">Cytoplasm</keyword>
<keyword id="KW-0206">Cytoskeleton</keyword>
<keyword id="KW-0256">Endoplasmic reticulum</keyword>
<keyword id="KW-1017">Isopeptide bond</keyword>
<keyword id="KW-0472">Membrane</keyword>
<keyword id="KW-0539">Nucleus</keyword>
<keyword id="KW-0597">Phosphoprotein</keyword>
<keyword id="KW-1185">Reference proteome</keyword>
<keyword id="KW-0832">Ubl conjugation</keyword>
<keyword id="KW-0833">Ubl conjugation pathway</keyword>
<evidence type="ECO:0000250" key="1">
    <source>
        <dbReference type="UniProtKB" id="Q96JB5"/>
    </source>
</evidence>
<evidence type="ECO:0000250" key="2">
    <source>
        <dbReference type="UniProtKB" id="Q99LM2"/>
    </source>
</evidence>
<evidence type="ECO:0000250" key="3">
    <source>
        <dbReference type="UniProtKB" id="Q9JLH7"/>
    </source>
</evidence>
<evidence type="ECO:0000305" key="4"/>
<proteinExistence type="evidence at transcript level"/>
<sequence>MEDHQHVPIDIQTSKLLDWLVDRRHCSLKWQSLVLTIREKINAAIQDMPESEEIAQLLSGSYIHYFHCLRILDLLKGTEASTKNIFGRYSSQRMKDWQEIIALYEKDNTYLVELSSLLVRNVNYEIPSLKKQIAKCQQLQQEYSRKEEECQAGAAEMREQFYHSCKQYGITGENVRGELLALVKDLPSQLAETGAAARQSLGEAIDVYQASVGFVCESHTEQVLPMLQFVQKRGNSTVYEWRTGTEPSVVERPHLEELPEQVAEDAIDWGDFGVEAVSEGTDSGISAKAAGIDWGIFPESDSKDPGGDGIDWGDDAVALQITVLEAGTQAPEGVARGPDALTLLEYTETRNQFLDELMELEIFLARRAVELSEEADVLSVSQFQLAPAILQGQTKEKTVTMVSVLEDLIGKLTSLQLQHLFMILASPRYVDRVTEFLQQKLKQSQLLALKKELMVQKQQEALEEQAALEPKLDLLLEKTKELQKLIEADISKRYSGRPVNLMGTSL</sequence>
<dbReference type="EMBL" id="CR857387">
    <property type="protein sequence ID" value="CAH89681.1"/>
    <property type="molecule type" value="mRNA"/>
</dbReference>
<dbReference type="SMR" id="Q5REX6"/>
<dbReference type="STRING" id="9601.ENSPPYP00000009966"/>
<dbReference type="eggNOG" id="KOG2607">
    <property type="taxonomic scope" value="Eukaryota"/>
</dbReference>
<dbReference type="InParanoid" id="Q5REX6"/>
<dbReference type="Proteomes" id="UP000001595">
    <property type="component" value="Unplaced"/>
</dbReference>
<dbReference type="GO" id="GO:0005813">
    <property type="term" value="C:centrosome"/>
    <property type="evidence" value="ECO:0000250"/>
    <property type="project" value="UniProtKB"/>
</dbReference>
<dbReference type="GO" id="GO:0005737">
    <property type="term" value="C:cytoplasm"/>
    <property type="evidence" value="ECO:0000250"/>
    <property type="project" value="UniProtKB"/>
</dbReference>
<dbReference type="GO" id="GO:0005789">
    <property type="term" value="C:endoplasmic reticulum membrane"/>
    <property type="evidence" value="ECO:0000250"/>
    <property type="project" value="UniProtKB"/>
</dbReference>
<dbReference type="GO" id="GO:0005634">
    <property type="term" value="C:nucleus"/>
    <property type="evidence" value="ECO:0000250"/>
    <property type="project" value="UniProtKB"/>
</dbReference>
<dbReference type="GO" id="GO:1990756">
    <property type="term" value="F:ubiquitin-like ligase-substrate adaptor activity"/>
    <property type="evidence" value="ECO:0000250"/>
    <property type="project" value="UniProtKB"/>
</dbReference>
<dbReference type="GO" id="GO:0044389">
    <property type="term" value="F:ubiquitin-like protein ligase binding"/>
    <property type="evidence" value="ECO:0000250"/>
    <property type="project" value="UniProtKB"/>
</dbReference>
<dbReference type="GO" id="GO:0030262">
    <property type="term" value="P:apoptotic nuclear changes"/>
    <property type="evidence" value="ECO:0000250"/>
    <property type="project" value="UniProtKB"/>
</dbReference>
<dbReference type="GO" id="GO:0008283">
    <property type="term" value="P:cell population proliferation"/>
    <property type="evidence" value="ECO:0000250"/>
    <property type="project" value="UniProtKB"/>
</dbReference>
<dbReference type="GO" id="GO:0060318">
    <property type="term" value="P:definitive erythrocyte differentiation"/>
    <property type="evidence" value="ECO:0000250"/>
    <property type="project" value="UniProtKB"/>
</dbReference>
<dbReference type="GO" id="GO:0030968">
    <property type="term" value="P:endoplasmic reticulum unfolded protein response"/>
    <property type="evidence" value="ECO:0000250"/>
    <property type="project" value="UniProtKB"/>
</dbReference>
<dbReference type="GO" id="GO:0001889">
    <property type="term" value="P:liver development"/>
    <property type="evidence" value="ECO:0000250"/>
    <property type="project" value="UniProtKB"/>
</dbReference>
<dbReference type="GO" id="GO:0007095">
    <property type="term" value="P:mitotic G2 DNA damage checkpoint signaling"/>
    <property type="evidence" value="ECO:0000250"/>
    <property type="project" value="UniProtKB"/>
</dbReference>
<dbReference type="GO" id="GO:0044818">
    <property type="term" value="P:mitotic G2/M transition checkpoint"/>
    <property type="evidence" value="ECO:0000250"/>
    <property type="project" value="UniProtKB"/>
</dbReference>
<dbReference type="GO" id="GO:0043407">
    <property type="term" value="P:negative regulation of MAP kinase activity"/>
    <property type="evidence" value="ECO:0000250"/>
    <property type="project" value="UniProtKB"/>
</dbReference>
<dbReference type="GO" id="GO:0032088">
    <property type="term" value="P:negative regulation of NF-kappaB transcription factor activity"/>
    <property type="evidence" value="ECO:0000250"/>
    <property type="project" value="UniProtKB"/>
</dbReference>
<dbReference type="GO" id="GO:0042177">
    <property type="term" value="P:negative regulation of protein catabolic process"/>
    <property type="evidence" value="ECO:0000250"/>
    <property type="project" value="UniProtKB"/>
</dbReference>
<dbReference type="GO" id="GO:0044387">
    <property type="term" value="P:negative regulation of protein kinase activity by regulation of protein phosphorylation"/>
    <property type="evidence" value="ECO:0000250"/>
    <property type="project" value="UniProtKB"/>
</dbReference>
<dbReference type="GO" id="GO:0001933">
    <property type="term" value="P:negative regulation of protein phosphorylation"/>
    <property type="evidence" value="ECO:0000250"/>
    <property type="project" value="UniProtKB"/>
</dbReference>
<dbReference type="GO" id="GO:0071901">
    <property type="term" value="P:negative regulation of protein serine/threonine kinase activity"/>
    <property type="evidence" value="ECO:0000250"/>
    <property type="project" value="UniProtKB"/>
</dbReference>
<dbReference type="GO" id="GO:1900182">
    <property type="term" value="P:positive regulation of protein localization to nucleus"/>
    <property type="evidence" value="ECO:0000250"/>
    <property type="project" value="UniProtKB"/>
</dbReference>
<dbReference type="GO" id="GO:0031398">
    <property type="term" value="P:positive regulation of protein ubiquitination"/>
    <property type="evidence" value="ECO:0000250"/>
    <property type="project" value="UniProtKB"/>
</dbReference>
<dbReference type="GO" id="GO:0140501">
    <property type="term" value="P:positive regulation of reticulophagy"/>
    <property type="evidence" value="ECO:0000250"/>
    <property type="project" value="UniProtKB"/>
</dbReference>
<dbReference type="GO" id="GO:1901798">
    <property type="term" value="P:positive regulation of signal transduction by p53 class mediator"/>
    <property type="evidence" value="ECO:0000250"/>
    <property type="project" value="UniProtKB"/>
</dbReference>
<dbReference type="GO" id="GO:0071569">
    <property type="term" value="P:protein ufmylation"/>
    <property type="evidence" value="ECO:0000250"/>
    <property type="project" value="UniProtKB"/>
</dbReference>
<dbReference type="GO" id="GO:0010921">
    <property type="term" value="P:regulation of phosphatase activity"/>
    <property type="evidence" value="ECO:0000250"/>
    <property type="project" value="UniProtKB"/>
</dbReference>
<dbReference type="GO" id="GO:0034976">
    <property type="term" value="P:response to endoplasmic reticulum stress"/>
    <property type="evidence" value="ECO:0000250"/>
    <property type="project" value="UniProtKB"/>
</dbReference>
<dbReference type="GO" id="GO:0032790">
    <property type="term" value="P:ribosome disassembly"/>
    <property type="evidence" value="ECO:0000250"/>
    <property type="project" value="UniProtKB"/>
</dbReference>
<dbReference type="InterPro" id="IPR008491">
    <property type="entry name" value="CDK5RAP3"/>
</dbReference>
<dbReference type="PANTHER" id="PTHR14894">
    <property type="entry name" value="CDK5 REGULATORY SUBUNIT-ASSOCIATED PROTEIN 3"/>
    <property type="match status" value="1"/>
</dbReference>
<dbReference type="PANTHER" id="PTHR14894:SF0">
    <property type="entry name" value="CDK5 REGULATORY SUBUNIT-ASSOCIATED PROTEIN 3"/>
    <property type="match status" value="1"/>
</dbReference>
<dbReference type="Pfam" id="PF05600">
    <property type="entry name" value="CDK5RAP3"/>
    <property type="match status" value="1"/>
</dbReference>
<gene>
    <name evidence="1" type="primary">CDK5RAP3</name>
</gene>
<name>CK5P3_PONAB</name>
<protein>
    <recommendedName>
        <fullName evidence="4">CDK5 regulatory subunit-associated protein 3</fullName>
    </recommendedName>
</protein>
<comment type="function">
    <text evidence="1 2">Substrate adapter of E3 ligase complexes mediating ufmylation, the covalent attachment of the ubiquitin-like modifier UFM1 to substrate proteins, and which is involved in various processes, such as ribosome recycling and reticulophagy (also called ER-phagy). As part of the UREL complex, plays a key role in ribosome recycling by promoting mono-ufmylation of RPL26/uL24 subunit of the 60S ribosome. Ufmylation of RPL26/uL24 occurs on free 60S ribosomes following ribosome dissociation: it weakens the junction between post-termination 60S subunits and SEC61 translocons, promoting release and recycling of the large ribosomal subunit from the endoplasmic reticulum membrane. Ufmylation of RPL26/uL24 and subsequent 60S ribosome recycling either take place after normal termination of translation or after ribosome stalling during cotranslational translocation at the endoplasmic reticulum. Within the UREL complex, CDK5RAP3 acts as a substrate adapter that constrains UFL1 ligase activity to mono-ufmylate RPL26/uL24 at 'Lys-134'. The UREL complex is also involved in reticulophagy in response to endoplasmic reticulum stress by promoting ufmylation of proteins such as CYB5R3, thereby promoting lysosomal degradation of ufmylated proteins. Also acts as a regulator of transcription: negatively regulates NF-kappa-B-mediated gene transcription through the control of RELA phosphorylation. Also regulates mitotic G2/M transition checkpoint and mitotic G2 DNA damage checkpoint. Through its interaction with CDKN2A/ARF and MDM2 may induce MDM2-dependent p53/TP53 ubiquitination, stabilization and activation in the nucleus, thereby promoting G1 cell cycle arrest and inhibition of cell proliferation. May also play a role in the rupture of the nuclear envelope during apoptosis. May regulate MAPK14 activity by regulating its dephosphorylation by PPM1D/WIP1 (By similarity). Required for liver development (By similarity).</text>
</comment>
<comment type="subunit">
    <text evidence="1 3">Substrate adapter component of the UFM1 ribosome E3 ligase (UREL) complex, composed of UFL1, DDRGK1 and CDK5RAP3 (By similarity). Interaction with UFL1 anchors CDK5RAP3 in the cytoplasm, preventing its translocation to the nucleus which allows expression of the CCND1 cyclin and progression of cells through the G1/S transition (By similarity). Interacts with ATG8 family proteins MAP1LC3A, MAP1LC3B, GABARAP, GABARAPL1 and GABARAPL2. Interacts with CDK5R1; competes with CDK5RAP1 and CDK5RAP2. Interacts with RELA. Interacts with CHEK1; may negatively regulate CHEK1 and thereby stimulate entry into mitosis. Interacts with CDKN2A/ARF and MDM2; forms a ternary complex involved in regulation of p53/TP53. Interacts with MAPK14. Interacts with CCNB1. Interacts with TUBG1; may regulate CDK5RAP3 in mitotic G2/M transition checkpoint (By similarity).</text>
</comment>
<comment type="subcellular location">
    <subcellularLocation>
        <location evidence="1">Endoplasmic reticulum membrane</location>
    </subcellularLocation>
    <subcellularLocation>
        <location evidence="1">Cytoplasm</location>
    </subcellularLocation>
    <subcellularLocation>
        <location evidence="1">Nucleus</location>
    </subcellularLocation>
    <subcellularLocation>
        <location evidence="1">Cytoplasm</location>
        <location evidence="1">Cytoskeleton</location>
        <location evidence="1">Microtubule organizing center</location>
        <location evidence="1">Centrosome</location>
    </subcellularLocation>
    <subcellularLocation>
        <location evidence="1">Cytoplasm</location>
        <location evidence="1">Cytoskeleton</location>
    </subcellularLocation>
    <text evidence="1">Tethered to the endoplasmic reticulum membrane as part of the UFM1 ribosome E3 ligase (UREL) complex. Colocalizes and associates with microtubules.</text>
</comment>
<comment type="domain">
    <text evidence="1">The shuffled ATG8-binding motifs mediate interaction with both ATG8 family protein and UFM1.</text>
</comment>
<comment type="domain">
    <text evidence="1">The RPL10a-binding domain (RBD) anchors the UREL complex onto the ribosome via association with RPL10a/ul1.</text>
</comment>
<comment type="PTM">
    <text evidence="3">May be phosphorylated by CDK5.</text>
</comment>
<comment type="PTM">
    <text evidence="1">Ubiquitinated. Probably triggers proteasomal degradation and is negatively regulated by UFL1.</text>
</comment>
<comment type="PTM">
    <text evidence="2">May be ufmylated.</text>
</comment>
<comment type="PTM">
    <text evidence="1">Cleaved by caspases early during apoptosis, the resulting peptides may play a role in rupture of the nuclear envelope.</text>
</comment>
<comment type="similarity">
    <text evidence="4">Belongs to the CDK5RAP3 family.</text>
</comment>
<organism>
    <name type="scientific">Pongo abelii</name>
    <name type="common">Sumatran orangutan</name>
    <name type="synonym">Pongo pygmaeus abelii</name>
    <dbReference type="NCBI Taxonomy" id="9601"/>
    <lineage>
        <taxon>Eukaryota</taxon>
        <taxon>Metazoa</taxon>
        <taxon>Chordata</taxon>
        <taxon>Craniata</taxon>
        <taxon>Vertebrata</taxon>
        <taxon>Euteleostomi</taxon>
        <taxon>Mammalia</taxon>
        <taxon>Eutheria</taxon>
        <taxon>Euarchontoglires</taxon>
        <taxon>Primates</taxon>
        <taxon>Haplorrhini</taxon>
        <taxon>Catarrhini</taxon>
        <taxon>Hominidae</taxon>
        <taxon>Pongo</taxon>
    </lineage>
</organism>
<accession>Q5REX6</accession>
<feature type="chain" id="PRO_0000220518" description="CDK5 regulatory subunit-associated protein 3">
    <location>
        <begin position="1"/>
        <end position="506"/>
    </location>
</feature>
<feature type="region of interest" description="Required for interaction with UFL1 and mediates interaction with CHEK1" evidence="1">
    <location>
        <begin position="269"/>
        <end position="506"/>
    </location>
</feature>
<feature type="region of interest" description="RPL10a-binding domain (RBD)" evidence="1">
    <location>
        <begin position="355"/>
        <end position="370"/>
    </location>
</feature>
<feature type="short sequence motif" description="Shuffled ATG8-binding motif 1" evidence="1">
    <location>
        <begin position="267"/>
        <end position="270"/>
    </location>
</feature>
<feature type="short sequence motif" description="Shuffled ATG8-binding motif 2" evidence="1">
    <location>
        <begin position="292"/>
        <end position="295"/>
    </location>
</feature>
<feature type="short sequence motif" description="Shuffled ATG8-binding motif 3" evidence="1">
    <location>
        <begin position="310"/>
        <end position="313"/>
    </location>
</feature>
<feature type="cross-link" description="Glycyl lysine isopeptide (Lys-Gly) (interchain with G-Cter in SUMO2)" evidence="1">
    <location>
        <position position="450"/>
    </location>
</feature>
<reference key="1">
    <citation type="submission" date="2004-11" db="EMBL/GenBank/DDBJ databases">
        <authorList>
            <consortium name="The German cDNA consortium"/>
        </authorList>
    </citation>
    <scope>NUCLEOTIDE SEQUENCE [LARGE SCALE MRNA]</scope>
    <source>
        <tissue>Kidney</tissue>
    </source>
</reference>